<reference key="1">
    <citation type="journal article" date="2006" name="J. Bacteriol.">
        <title>Pathogenomic sequence analysis of Bacillus cereus and Bacillus thuringiensis isolates closely related to Bacillus anthracis.</title>
        <authorList>
            <person name="Han C.S."/>
            <person name="Xie G."/>
            <person name="Challacombe J.F."/>
            <person name="Altherr M.R."/>
            <person name="Bhotika S.S."/>
            <person name="Bruce D."/>
            <person name="Campbell C.S."/>
            <person name="Campbell M.L."/>
            <person name="Chen J."/>
            <person name="Chertkov O."/>
            <person name="Cleland C."/>
            <person name="Dimitrijevic M."/>
            <person name="Doggett N.A."/>
            <person name="Fawcett J.J."/>
            <person name="Glavina T."/>
            <person name="Goodwin L.A."/>
            <person name="Hill K.K."/>
            <person name="Hitchcock P."/>
            <person name="Jackson P.J."/>
            <person name="Keim P."/>
            <person name="Kewalramani A.R."/>
            <person name="Longmire J."/>
            <person name="Lucas S."/>
            <person name="Malfatti S."/>
            <person name="McMurry K."/>
            <person name="Meincke L.J."/>
            <person name="Misra M."/>
            <person name="Moseman B.L."/>
            <person name="Mundt M."/>
            <person name="Munk A.C."/>
            <person name="Okinaka R.T."/>
            <person name="Parson-Quintana B."/>
            <person name="Reilly L.P."/>
            <person name="Richardson P."/>
            <person name="Robinson D.L."/>
            <person name="Rubin E."/>
            <person name="Saunders E."/>
            <person name="Tapia R."/>
            <person name="Tesmer J.G."/>
            <person name="Thayer N."/>
            <person name="Thompson L.S."/>
            <person name="Tice H."/>
            <person name="Ticknor L.O."/>
            <person name="Wills P.L."/>
            <person name="Brettin T.S."/>
            <person name="Gilna P."/>
        </authorList>
    </citation>
    <scope>NUCLEOTIDE SEQUENCE [LARGE SCALE GENOMIC DNA]</scope>
    <source>
        <strain>97-27</strain>
    </source>
</reference>
<accession>Q6HG98</accession>
<dbReference type="EC" id="7.-.-.-"/>
<dbReference type="EMBL" id="AE017355">
    <property type="protein sequence ID" value="AAT60372.1"/>
    <property type="molecule type" value="Genomic_DNA"/>
</dbReference>
<dbReference type="RefSeq" id="WP_000225543.1">
    <property type="nucleotide sequence ID" value="NC_005957.1"/>
</dbReference>
<dbReference type="RefSeq" id="YP_037428.1">
    <property type="nucleotide sequence ID" value="NC_005957.1"/>
</dbReference>
<dbReference type="SMR" id="Q6HG98"/>
<dbReference type="KEGG" id="btk:BT9727_3105"/>
<dbReference type="PATRIC" id="fig|281309.8.peg.3307"/>
<dbReference type="HOGENOM" id="CLU_000604_86_7_9"/>
<dbReference type="Proteomes" id="UP000001301">
    <property type="component" value="Chromosome"/>
</dbReference>
<dbReference type="GO" id="GO:0043190">
    <property type="term" value="C:ATP-binding cassette (ABC) transporter complex"/>
    <property type="evidence" value="ECO:0007669"/>
    <property type="project" value="TreeGrafter"/>
</dbReference>
<dbReference type="GO" id="GO:0005524">
    <property type="term" value="F:ATP binding"/>
    <property type="evidence" value="ECO:0007669"/>
    <property type="project" value="UniProtKB-KW"/>
</dbReference>
<dbReference type="GO" id="GO:0016887">
    <property type="term" value="F:ATP hydrolysis activity"/>
    <property type="evidence" value="ECO:0007669"/>
    <property type="project" value="InterPro"/>
</dbReference>
<dbReference type="GO" id="GO:0042626">
    <property type="term" value="F:ATPase-coupled transmembrane transporter activity"/>
    <property type="evidence" value="ECO:0007669"/>
    <property type="project" value="TreeGrafter"/>
</dbReference>
<dbReference type="CDD" id="cd03225">
    <property type="entry name" value="ABC_cobalt_CbiO_domain1"/>
    <property type="match status" value="1"/>
</dbReference>
<dbReference type="CDD" id="cd03226">
    <property type="entry name" value="ABC_cobalt_CbiO_domain2"/>
    <property type="match status" value="1"/>
</dbReference>
<dbReference type="Gene3D" id="3.40.50.300">
    <property type="entry name" value="P-loop containing nucleotide triphosphate hydrolases"/>
    <property type="match status" value="2"/>
</dbReference>
<dbReference type="InterPro" id="IPR003593">
    <property type="entry name" value="AAA+_ATPase"/>
</dbReference>
<dbReference type="InterPro" id="IPR003439">
    <property type="entry name" value="ABC_transporter-like_ATP-bd"/>
</dbReference>
<dbReference type="InterPro" id="IPR017871">
    <property type="entry name" value="ABC_transporter-like_CS"/>
</dbReference>
<dbReference type="InterPro" id="IPR015856">
    <property type="entry name" value="ABC_transpr_CbiO/EcfA_su"/>
</dbReference>
<dbReference type="InterPro" id="IPR050095">
    <property type="entry name" value="ECF_ABC_transporter_ATP-bd"/>
</dbReference>
<dbReference type="InterPro" id="IPR027417">
    <property type="entry name" value="P-loop_NTPase"/>
</dbReference>
<dbReference type="NCBIfam" id="NF010167">
    <property type="entry name" value="PRK13648.1"/>
    <property type="match status" value="2"/>
</dbReference>
<dbReference type="PANTHER" id="PTHR43553:SF27">
    <property type="entry name" value="ENERGY-COUPLING FACTOR TRANSPORTER ATP-BINDING PROTEIN ECFA2"/>
    <property type="match status" value="1"/>
</dbReference>
<dbReference type="PANTHER" id="PTHR43553">
    <property type="entry name" value="HEAVY METAL TRANSPORTER"/>
    <property type="match status" value="1"/>
</dbReference>
<dbReference type="Pfam" id="PF00005">
    <property type="entry name" value="ABC_tran"/>
    <property type="match status" value="2"/>
</dbReference>
<dbReference type="SMART" id="SM00382">
    <property type="entry name" value="AAA"/>
    <property type="match status" value="2"/>
</dbReference>
<dbReference type="SUPFAM" id="SSF52540">
    <property type="entry name" value="P-loop containing nucleoside triphosphate hydrolases"/>
    <property type="match status" value="2"/>
</dbReference>
<dbReference type="PROSITE" id="PS00211">
    <property type="entry name" value="ABC_TRANSPORTER_1"/>
    <property type="match status" value="2"/>
</dbReference>
<dbReference type="PROSITE" id="PS50893">
    <property type="entry name" value="ABC_TRANSPORTER_2"/>
    <property type="match status" value="2"/>
</dbReference>
<organism>
    <name type="scientific">Bacillus thuringiensis subsp. konkukian (strain 97-27)</name>
    <dbReference type="NCBI Taxonomy" id="281309"/>
    <lineage>
        <taxon>Bacteria</taxon>
        <taxon>Bacillati</taxon>
        <taxon>Bacillota</taxon>
        <taxon>Bacilli</taxon>
        <taxon>Bacillales</taxon>
        <taxon>Bacillaceae</taxon>
        <taxon>Bacillus</taxon>
        <taxon>Bacillus cereus group</taxon>
    </lineage>
</organism>
<gene>
    <name type="ordered locus">BT9727_3105</name>
</gene>
<proteinExistence type="inferred from homology"/>
<sequence>MVAHAEINNLSFVYADENEYALQHISLSIQKGEFIVLAGGSGSGKTTLLKHFKKELLPIGKRTGDTYYDGTLLENVPDLLSAQEIGMVFQNPENQLVMDTVIQELAFSLENIGLPSHIIQKRIAELISFLGFQDLLHQSVHTLSGGQKQLVNLAAVLVMQPKLLLLDEPTAQLDPIAAKEFLGLLKRINEELGITIVLSEHRLDEVIPLATRVICMSNGRIVYDGSPKTVVANMWEVEKFRPFIPQIPRLFLEWNAKDIPFTVREAQMKLNNFSAISYVNKPIAQSEKQEVILSAEHISFQYEKNSPLILRDLTVSIEKGEWVALVGKNGTGKSTLLTLLAGLQKARRGKVKWNGKVIHKIDSKERFKSIGYVSQHPYYHFTFDTVWDEVYERARELYGEQGKEIAEHQLKKFWLYGLKERHPHDCSGGEQQLLALCTTLLSKPTLLLLDEPTKGLDPWKKERVGELFRKLQKEGTTIVMATHDIEFAAKYVDQCMMLFDGAVIMNDAPKEFFSGNFFYTTSINRFIRKELPYALTWEDVYEACPNDILHS</sequence>
<comment type="function">
    <text evidence="1">Probably part of an ABC transporter complex. Responsible for energy coupling to the transport system (By similarity).</text>
</comment>
<comment type="subcellular location">
    <subcellularLocation>
        <location evidence="1">Cell membrane</location>
        <topology evidence="1">Peripheral membrane protein</topology>
    </subcellularLocation>
</comment>
<comment type="similarity">
    <text evidence="3">Belongs to the ABC transporter superfamily.</text>
</comment>
<protein>
    <recommendedName>
        <fullName>Putative ABC transporter ATP-binding protein BT9727_3105</fullName>
        <ecNumber>7.-.-.-</ecNumber>
    </recommendedName>
</protein>
<feature type="chain" id="PRO_0000091985" description="Putative ABC transporter ATP-binding protein BT9727_3105">
    <location>
        <begin position="1"/>
        <end position="551"/>
    </location>
</feature>
<feature type="domain" description="ABC transporter 1" evidence="2">
    <location>
        <begin position="5"/>
        <end position="243"/>
    </location>
</feature>
<feature type="domain" description="ABC transporter 2" evidence="2">
    <location>
        <begin position="293"/>
        <end position="525"/>
    </location>
</feature>
<feature type="binding site" evidence="2">
    <location>
        <begin position="39"/>
        <end position="46"/>
    </location>
    <ligand>
        <name>ATP</name>
        <dbReference type="ChEBI" id="CHEBI:30616"/>
        <label>1</label>
    </ligand>
</feature>
<feature type="binding site" evidence="2">
    <location>
        <begin position="327"/>
        <end position="334"/>
    </location>
    <ligand>
        <name>ATP</name>
        <dbReference type="ChEBI" id="CHEBI:30616"/>
        <label>2</label>
    </ligand>
</feature>
<name>Y3105_BACHK</name>
<keyword id="KW-0067">ATP-binding</keyword>
<keyword id="KW-1003">Cell membrane</keyword>
<keyword id="KW-0472">Membrane</keyword>
<keyword id="KW-0547">Nucleotide-binding</keyword>
<keyword id="KW-0677">Repeat</keyword>
<keyword id="KW-1278">Translocase</keyword>
<keyword id="KW-0813">Transport</keyword>
<evidence type="ECO:0000250" key="1"/>
<evidence type="ECO:0000255" key="2">
    <source>
        <dbReference type="PROSITE-ProRule" id="PRU00434"/>
    </source>
</evidence>
<evidence type="ECO:0000305" key="3"/>